<organism>
    <name type="scientific">Rattus norvegicus</name>
    <name type="common">Rat</name>
    <dbReference type="NCBI Taxonomy" id="10116"/>
    <lineage>
        <taxon>Eukaryota</taxon>
        <taxon>Metazoa</taxon>
        <taxon>Chordata</taxon>
        <taxon>Craniata</taxon>
        <taxon>Vertebrata</taxon>
        <taxon>Euteleostomi</taxon>
        <taxon>Mammalia</taxon>
        <taxon>Eutheria</taxon>
        <taxon>Euarchontoglires</taxon>
        <taxon>Glires</taxon>
        <taxon>Rodentia</taxon>
        <taxon>Myomorpha</taxon>
        <taxon>Muroidea</taxon>
        <taxon>Muridae</taxon>
        <taxon>Murinae</taxon>
        <taxon>Rattus</taxon>
    </lineage>
</organism>
<keyword id="KW-0408">Iron</keyword>
<keyword id="KW-0411">Iron-sulfur</keyword>
<keyword id="KW-0479">Metal-binding</keyword>
<keyword id="KW-0496">Mitochondrion</keyword>
<keyword id="KW-1185">Reference proteome</keyword>
<keyword id="KW-0809">Transit peptide</keyword>
<accession>Q80W96</accession>
<dbReference type="EMBL" id="AF508158">
    <property type="protein sequence ID" value="AAP29778.1"/>
    <property type="molecule type" value="mRNA"/>
</dbReference>
<dbReference type="EMBL" id="BC070929">
    <property type="protein sequence ID" value="AAH70929.1"/>
    <property type="molecule type" value="mRNA"/>
</dbReference>
<dbReference type="EMBL" id="BC078677">
    <property type="protein sequence ID" value="AAH78677.1"/>
    <property type="molecule type" value="mRNA"/>
</dbReference>
<dbReference type="RefSeq" id="NP_853657.1">
    <property type="nucleotide sequence ID" value="NM_181626.3"/>
</dbReference>
<dbReference type="SMR" id="Q80W96"/>
<dbReference type="FunCoup" id="Q80W96">
    <property type="interactions" value="1392"/>
</dbReference>
<dbReference type="STRING" id="10116.ENSRNOP00000024781"/>
<dbReference type="PhosphoSitePlus" id="Q80W96"/>
<dbReference type="PaxDb" id="10116-ENSRNOP00000024781"/>
<dbReference type="Ensembl" id="ENSRNOT00000117636.1">
    <property type="protein sequence ID" value="ENSRNOP00000078686.1"/>
    <property type="gene ID" value="ENSRNOG00000018343.7"/>
</dbReference>
<dbReference type="GeneID" id="290985"/>
<dbReference type="KEGG" id="rno:290985"/>
<dbReference type="UCSC" id="RGD:727792">
    <property type="organism name" value="rat"/>
</dbReference>
<dbReference type="AGR" id="RGD:727792"/>
<dbReference type="CTD" id="81689"/>
<dbReference type="RGD" id="727792">
    <property type="gene designation" value="Isca1"/>
</dbReference>
<dbReference type="eggNOG" id="KOG1120">
    <property type="taxonomic scope" value="Eukaryota"/>
</dbReference>
<dbReference type="GeneTree" id="ENSGT00490000043385"/>
<dbReference type="InParanoid" id="Q80W96"/>
<dbReference type="OMA" id="LYIYGMQ"/>
<dbReference type="OrthoDB" id="74549at9989"/>
<dbReference type="PhylomeDB" id="Q80W96"/>
<dbReference type="TreeFam" id="TF314956"/>
<dbReference type="Reactome" id="R-RNO-1362409">
    <property type="pathway name" value="Mitochondrial iron-sulfur cluster biogenesis"/>
</dbReference>
<dbReference type="PRO" id="PR:Q80W96"/>
<dbReference type="Proteomes" id="UP000002494">
    <property type="component" value="Chromosome 17"/>
</dbReference>
<dbReference type="GO" id="GO:0005737">
    <property type="term" value="C:cytoplasm"/>
    <property type="evidence" value="ECO:0000318"/>
    <property type="project" value="GO_Central"/>
</dbReference>
<dbReference type="GO" id="GO:0120510">
    <property type="term" value="C:mitochondrial [4Fe-4S] assembly complex"/>
    <property type="evidence" value="ECO:0000266"/>
    <property type="project" value="RGD"/>
</dbReference>
<dbReference type="GO" id="GO:0005739">
    <property type="term" value="C:mitochondrion"/>
    <property type="evidence" value="ECO:0000318"/>
    <property type="project" value="GO_Central"/>
</dbReference>
<dbReference type="GO" id="GO:0051537">
    <property type="term" value="F:2 iron, 2 sulfur cluster binding"/>
    <property type="evidence" value="ECO:0000318"/>
    <property type="project" value="GO_Central"/>
</dbReference>
<dbReference type="GO" id="GO:0046872">
    <property type="term" value="F:metal ion binding"/>
    <property type="evidence" value="ECO:0007669"/>
    <property type="project" value="UniProtKB-KW"/>
</dbReference>
<dbReference type="GO" id="GO:0050886">
    <property type="term" value="P:endocrine process"/>
    <property type="evidence" value="ECO:0000303"/>
    <property type="project" value="RGD"/>
</dbReference>
<dbReference type="GO" id="GO:0016226">
    <property type="term" value="P:iron-sulfur cluster assembly"/>
    <property type="evidence" value="ECO:0000318"/>
    <property type="project" value="GO_Central"/>
</dbReference>
<dbReference type="FunFam" id="2.60.300.12:FF:000001">
    <property type="entry name" value="Iron-binding protein IscA"/>
    <property type="match status" value="1"/>
</dbReference>
<dbReference type="Gene3D" id="2.60.300.12">
    <property type="entry name" value="HesB-like domain"/>
    <property type="match status" value="1"/>
</dbReference>
<dbReference type="InterPro" id="IPR050322">
    <property type="entry name" value="Fe-S_cluster_asmbl/transfer"/>
</dbReference>
<dbReference type="InterPro" id="IPR000361">
    <property type="entry name" value="FeS_biogenesis"/>
</dbReference>
<dbReference type="InterPro" id="IPR016092">
    <property type="entry name" value="FeS_cluster_insertion"/>
</dbReference>
<dbReference type="InterPro" id="IPR017870">
    <property type="entry name" value="FeS_cluster_insertion_CS"/>
</dbReference>
<dbReference type="InterPro" id="IPR035903">
    <property type="entry name" value="HesB-like_dom_sf"/>
</dbReference>
<dbReference type="NCBIfam" id="TIGR00049">
    <property type="entry name" value="iron-sulfur cluster assembly accessory protein"/>
    <property type="match status" value="1"/>
</dbReference>
<dbReference type="PANTHER" id="PTHR10072:SF41">
    <property type="entry name" value="IRON-SULFUR CLUSTER ASSEMBLY 1 HOMOLOG, MITOCHONDRIAL"/>
    <property type="match status" value="1"/>
</dbReference>
<dbReference type="PANTHER" id="PTHR10072">
    <property type="entry name" value="IRON-SULFUR CLUSTER ASSEMBLY PROTEIN"/>
    <property type="match status" value="1"/>
</dbReference>
<dbReference type="Pfam" id="PF01521">
    <property type="entry name" value="Fe-S_biosyn"/>
    <property type="match status" value="1"/>
</dbReference>
<dbReference type="SUPFAM" id="SSF89360">
    <property type="entry name" value="HesB-like domain"/>
    <property type="match status" value="1"/>
</dbReference>
<dbReference type="PROSITE" id="PS01152">
    <property type="entry name" value="HESB"/>
    <property type="match status" value="1"/>
</dbReference>
<protein>
    <recommendedName>
        <fullName>Iron-sulfur cluster assembly 1 homolog, mitochondrial</fullName>
    </recommendedName>
    <alternativeName>
        <fullName>HESB-like domain-containing protein 2</fullName>
    </alternativeName>
    <alternativeName>
        <fullName>Iron-sulfur assembly protein IscA</fullName>
    </alternativeName>
</protein>
<proteinExistence type="evidence at transcript level"/>
<comment type="function">
    <text evidence="2">Involved in the maturation of mitochondrial 4Fe-4S proteins functioning late in the iron-sulfur cluster assembly pathway. Probably involved in the binding of an intermediate of Fe/S cluster assembly.</text>
</comment>
<comment type="subunit">
    <text evidence="2">Interacts with CRY2, but not with CRY1 (in vitro).</text>
</comment>
<comment type="subcellular location">
    <subcellularLocation>
        <location evidence="2">Mitochondrion</location>
    </subcellularLocation>
</comment>
<comment type="similarity">
    <text evidence="4">Belongs to the HesB/IscA family.</text>
</comment>
<sequence>MSASLVRATVRAVSKRKLQPTRAALTLTPSAVNKIKQLLKDKPEHVGLKVGVRTRGCNGLSYSLEYTKTKGDADEEVIQDGVRVFIEKKAQLTLLGTEMDYVEDKLSSEFVFNNPNIKGTCGCGESFNV</sequence>
<reference key="1">
    <citation type="journal article" date="2004" name="Biochim. Biophys. Acta">
        <title>hIscA: a protein implicated in the biogenesis of iron-sulfur clusters.</title>
        <authorList>
            <person name="Cozar-Castellano I."/>
            <person name="del Valle Machargo M."/>
            <person name="Trujillo E."/>
            <person name="Arteaga M.F."/>
            <person name="Gonzalez T."/>
            <person name="Martin-Vasallo P."/>
            <person name="Avila J."/>
        </authorList>
    </citation>
    <scope>NUCLEOTIDE SEQUENCE [MRNA]</scope>
</reference>
<reference key="2">
    <citation type="journal article" date="2004" name="Genome Res.">
        <title>The status, quality, and expansion of the NIH full-length cDNA project: the Mammalian Gene Collection (MGC).</title>
        <authorList>
            <consortium name="The MGC Project Team"/>
        </authorList>
    </citation>
    <scope>NUCLEOTIDE SEQUENCE [LARGE SCALE MRNA]</scope>
    <source>
        <tissue>Lung</tissue>
        <tissue>Testis</tissue>
    </source>
</reference>
<name>ISCA1_RAT</name>
<feature type="transit peptide" description="Mitochondrion" evidence="3">
    <location>
        <begin position="1"/>
        <end position="12"/>
    </location>
</feature>
<feature type="chain" id="PRO_0000042737" description="Iron-sulfur cluster assembly 1 homolog, mitochondrial">
    <location>
        <begin position="13"/>
        <end position="129"/>
    </location>
</feature>
<feature type="binding site" evidence="1">
    <location>
        <position position="57"/>
    </location>
    <ligand>
        <name>Fe cation</name>
        <dbReference type="ChEBI" id="CHEBI:24875"/>
    </ligand>
</feature>
<feature type="binding site" evidence="1">
    <location>
        <position position="121"/>
    </location>
    <ligand>
        <name>Fe cation</name>
        <dbReference type="ChEBI" id="CHEBI:24875"/>
    </ligand>
</feature>
<feature type="binding site" evidence="1">
    <location>
        <position position="123"/>
    </location>
    <ligand>
        <name>Fe cation</name>
        <dbReference type="ChEBI" id="CHEBI:24875"/>
    </ligand>
</feature>
<gene>
    <name type="primary">Isca1</name>
    <name type="synonym">Hbld2</name>
</gene>
<evidence type="ECO:0000250" key="1">
    <source>
        <dbReference type="UniProtKB" id="P0AAC8"/>
    </source>
</evidence>
<evidence type="ECO:0000250" key="2">
    <source>
        <dbReference type="UniProtKB" id="Q9BUE6"/>
    </source>
</evidence>
<evidence type="ECO:0000255" key="3"/>
<evidence type="ECO:0000305" key="4"/>